<proteinExistence type="inferred from homology"/>
<feature type="chain" id="PRO_1000030472" description="D-alanine--D-alanine ligase">
    <location>
        <begin position="1"/>
        <end position="304"/>
    </location>
</feature>
<feature type="domain" description="ATP-grasp" evidence="2">
    <location>
        <begin position="103"/>
        <end position="299"/>
    </location>
</feature>
<feature type="binding site" evidence="2">
    <location>
        <begin position="129"/>
        <end position="184"/>
    </location>
    <ligand>
        <name>ATP</name>
        <dbReference type="ChEBI" id="CHEBI:30616"/>
    </ligand>
</feature>
<feature type="binding site" evidence="2">
    <location>
        <position position="253"/>
    </location>
    <ligand>
        <name>Mg(2+)</name>
        <dbReference type="ChEBI" id="CHEBI:18420"/>
        <label>1</label>
    </ligand>
</feature>
<feature type="binding site" evidence="2">
    <location>
        <position position="266"/>
    </location>
    <ligand>
        <name>Mg(2+)</name>
        <dbReference type="ChEBI" id="CHEBI:18420"/>
        <label>1</label>
    </ligand>
</feature>
<feature type="binding site" evidence="2">
    <location>
        <position position="266"/>
    </location>
    <ligand>
        <name>Mg(2+)</name>
        <dbReference type="ChEBI" id="CHEBI:18420"/>
        <label>2</label>
    </ligand>
</feature>
<feature type="binding site" evidence="2">
    <location>
        <position position="268"/>
    </location>
    <ligand>
        <name>Mg(2+)</name>
        <dbReference type="ChEBI" id="CHEBI:18420"/>
        <label>2</label>
    </ligand>
</feature>
<reference key="1">
    <citation type="submission" date="2003-03" db="EMBL/GenBank/DDBJ databases">
        <title>The complete genome sequence of Neisseria gonorrhoeae.</title>
        <authorList>
            <person name="Lewis L.A."/>
            <person name="Gillaspy A.F."/>
            <person name="McLaughlin R.E."/>
            <person name="Gipson M."/>
            <person name="Ducey T.F."/>
            <person name="Ownbey T."/>
            <person name="Hartman K."/>
            <person name="Nydick C."/>
            <person name="Carson M.B."/>
            <person name="Vaughn J."/>
            <person name="Thomson C."/>
            <person name="Song L."/>
            <person name="Lin S."/>
            <person name="Yuan X."/>
            <person name="Najar F."/>
            <person name="Zhan M."/>
            <person name="Ren Q."/>
            <person name="Zhu H."/>
            <person name="Qi S."/>
            <person name="Kenton S.M."/>
            <person name="Lai H."/>
            <person name="White J.D."/>
            <person name="Clifton S."/>
            <person name="Roe B.A."/>
            <person name="Dyer D.W."/>
        </authorList>
    </citation>
    <scope>NUCLEOTIDE SEQUENCE [LARGE SCALE GENOMIC DNA]</scope>
    <source>
        <strain>ATCC 700825 / FA 1090</strain>
    </source>
</reference>
<name>DDL_NEIG1</name>
<sequence>MQNFGKVAVLMGGFSSEREISLDSGTAILNALKSKGIDAYAFDPKETPLSELKERGFQTAFNILHGTYGEDGAVQGALELLGIPYTGSGVAASAIGMDKYRCKLIWQALGLPVPEFAVLYDDTDFDAVEEKLGLPMFVKPAAEGSSVGVVKVKEKGRLKSVYEELKHLQGEIIAERFIGGGEYSCPVLNGKGLPGIHIIPATEFYDYEAKYNRDDTIYQCPSEDLTEAEESLMRELAVRGAQAIGAEGCVRVDFLKDTDGKLYLLEINTLPGMTGHSLVPKSAAVTGVGFADLCIEILKAAHVG</sequence>
<evidence type="ECO:0000250" key="1"/>
<evidence type="ECO:0000255" key="2">
    <source>
        <dbReference type="HAMAP-Rule" id="MF_00047"/>
    </source>
</evidence>
<organism>
    <name type="scientific">Neisseria gonorrhoeae (strain ATCC 700825 / FA 1090)</name>
    <dbReference type="NCBI Taxonomy" id="242231"/>
    <lineage>
        <taxon>Bacteria</taxon>
        <taxon>Pseudomonadati</taxon>
        <taxon>Pseudomonadota</taxon>
        <taxon>Betaproteobacteria</taxon>
        <taxon>Neisseriales</taxon>
        <taxon>Neisseriaceae</taxon>
        <taxon>Neisseria</taxon>
    </lineage>
</organism>
<gene>
    <name evidence="2" type="primary">ddl</name>
    <name type="ordered locus">NGO_1531</name>
</gene>
<comment type="function">
    <text evidence="2">Cell wall formation.</text>
</comment>
<comment type="catalytic activity">
    <reaction evidence="2">
        <text>2 D-alanine + ATP = D-alanyl-D-alanine + ADP + phosphate + H(+)</text>
        <dbReference type="Rhea" id="RHEA:11224"/>
        <dbReference type="ChEBI" id="CHEBI:15378"/>
        <dbReference type="ChEBI" id="CHEBI:30616"/>
        <dbReference type="ChEBI" id="CHEBI:43474"/>
        <dbReference type="ChEBI" id="CHEBI:57416"/>
        <dbReference type="ChEBI" id="CHEBI:57822"/>
        <dbReference type="ChEBI" id="CHEBI:456216"/>
        <dbReference type="EC" id="6.3.2.4"/>
    </reaction>
</comment>
<comment type="cofactor">
    <cofactor evidence="1">
        <name>Mg(2+)</name>
        <dbReference type="ChEBI" id="CHEBI:18420"/>
    </cofactor>
    <cofactor evidence="1">
        <name>Mn(2+)</name>
        <dbReference type="ChEBI" id="CHEBI:29035"/>
    </cofactor>
    <text evidence="1">Binds 2 magnesium or manganese ions per subunit.</text>
</comment>
<comment type="pathway">
    <text evidence="2">Cell wall biogenesis; peptidoglycan biosynthesis.</text>
</comment>
<comment type="subcellular location">
    <subcellularLocation>
        <location evidence="2">Cytoplasm</location>
    </subcellularLocation>
</comment>
<comment type="similarity">
    <text evidence="2">Belongs to the D-alanine--D-alanine ligase family.</text>
</comment>
<keyword id="KW-0067">ATP-binding</keyword>
<keyword id="KW-0133">Cell shape</keyword>
<keyword id="KW-0961">Cell wall biogenesis/degradation</keyword>
<keyword id="KW-0963">Cytoplasm</keyword>
<keyword id="KW-0436">Ligase</keyword>
<keyword id="KW-0460">Magnesium</keyword>
<keyword id="KW-0464">Manganese</keyword>
<keyword id="KW-0479">Metal-binding</keyword>
<keyword id="KW-0547">Nucleotide-binding</keyword>
<keyword id="KW-0573">Peptidoglycan synthesis</keyword>
<keyword id="KW-1185">Reference proteome</keyword>
<dbReference type="EC" id="6.3.2.4" evidence="2"/>
<dbReference type="EMBL" id="AE004969">
    <property type="protein sequence ID" value="AAW90167.1"/>
    <property type="molecule type" value="Genomic_DNA"/>
</dbReference>
<dbReference type="RefSeq" id="WP_003689437.1">
    <property type="nucleotide sequence ID" value="NC_002946.2"/>
</dbReference>
<dbReference type="RefSeq" id="YP_208579.1">
    <property type="nucleotide sequence ID" value="NC_002946.2"/>
</dbReference>
<dbReference type="SMR" id="Q5F6M0"/>
<dbReference type="STRING" id="242231.NGO_1531"/>
<dbReference type="KEGG" id="ngo:NGO_1531"/>
<dbReference type="PATRIC" id="fig|242231.10.peg.1827"/>
<dbReference type="HOGENOM" id="CLU_039268_1_2_4"/>
<dbReference type="UniPathway" id="UPA00219"/>
<dbReference type="Proteomes" id="UP000000535">
    <property type="component" value="Chromosome"/>
</dbReference>
<dbReference type="GO" id="GO:0005737">
    <property type="term" value="C:cytoplasm"/>
    <property type="evidence" value="ECO:0007669"/>
    <property type="project" value="UniProtKB-SubCell"/>
</dbReference>
<dbReference type="GO" id="GO:0005524">
    <property type="term" value="F:ATP binding"/>
    <property type="evidence" value="ECO:0007669"/>
    <property type="project" value="UniProtKB-KW"/>
</dbReference>
<dbReference type="GO" id="GO:0008716">
    <property type="term" value="F:D-alanine-D-alanine ligase activity"/>
    <property type="evidence" value="ECO:0007669"/>
    <property type="project" value="UniProtKB-UniRule"/>
</dbReference>
<dbReference type="GO" id="GO:0046872">
    <property type="term" value="F:metal ion binding"/>
    <property type="evidence" value="ECO:0007669"/>
    <property type="project" value="UniProtKB-KW"/>
</dbReference>
<dbReference type="GO" id="GO:0071555">
    <property type="term" value="P:cell wall organization"/>
    <property type="evidence" value="ECO:0007669"/>
    <property type="project" value="UniProtKB-KW"/>
</dbReference>
<dbReference type="GO" id="GO:0009252">
    <property type="term" value="P:peptidoglycan biosynthetic process"/>
    <property type="evidence" value="ECO:0007669"/>
    <property type="project" value="UniProtKB-UniRule"/>
</dbReference>
<dbReference type="GO" id="GO:0008360">
    <property type="term" value="P:regulation of cell shape"/>
    <property type="evidence" value="ECO:0007669"/>
    <property type="project" value="UniProtKB-KW"/>
</dbReference>
<dbReference type="FunFam" id="3.30.1490.20:FF:000023">
    <property type="entry name" value="D-alanine--D-alanine ligase"/>
    <property type="match status" value="1"/>
</dbReference>
<dbReference type="FunFam" id="3.30.470.20:FF:000008">
    <property type="entry name" value="D-alanine--D-alanine ligase"/>
    <property type="match status" value="1"/>
</dbReference>
<dbReference type="FunFam" id="3.40.50.20:FF:000013">
    <property type="entry name" value="D-alanine--D-alanine ligase"/>
    <property type="match status" value="1"/>
</dbReference>
<dbReference type="Gene3D" id="3.40.50.20">
    <property type="match status" value="1"/>
</dbReference>
<dbReference type="Gene3D" id="3.30.1490.20">
    <property type="entry name" value="ATP-grasp fold, A domain"/>
    <property type="match status" value="1"/>
</dbReference>
<dbReference type="Gene3D" id="3.30.470.20">
    <property type="entry name" value="ATP-grasp fold, B domain"/>
    <property type="match status" value="1"/>
</dbReference>
<dbReference type="HAMAP" id="MF_00047">
    <property type="entry name" value="Dala_Dala_lig"/>
    <property type="match status" value="1"/>
</dbReference>
<dbReference type="InterPro" id="IPR011761">
    <property type="entry name" value="ATP-grasp"/>
</dbReference>
<dbReference type="InterPro" id="IPR013815">
    <property type="entry name" value="ATP_grasp_subdomain_1"/>
</dbReference>
<dbReference type="InterPro" id="IPR000291">
    <property type="entry name" value="D-Ala_lig_Van_CS"/>
</dbReference>
<dbReference type="InterPro" id="IPR005905">
    <property type="entry name" value="D_ala_D_ala"/>
</dbReference>
<dbReference type="InterPro" id="IPR011095">
    <property type="entry name" value="Dala_Dala_lig_C"/>
</dbReference>
<dbReference type="InterPro" id="IPR011127">
    <property type="entry name" value="Dala_Dala_lig_N"/>
</dbReference>
<dbReference type="InterPro" id="IPR016185">
    <property type="entry name" value="PreATP-grasp_dom_sf"/>
</dbReference>
<dbReference type="NCBIfam" id="TIGR01205">
    <property type="entry name" value="D_ala_D_alaTIGR"/>
    <property type="match status" value="1"/>
</dbReference>
<dbReference type="NCBIfam" id="NF002378">
    <property type="entry name" value="PRK01372.1"/>
    <property type="match status" value="1"/>
</dbReference>
<dbReference type="PANTHER" id="PTHR23132">
    <property type="entry name" value="D-ALANINE--D-ALANINE LIGASE"/>
    <property type="match status" value="1"/>
</dbReference>
<dbReference type="PANTHER" id="PTHR23132:SF23">
    <property type="entry name" value="D-ALANINE--D-ALANINE LIGASE B"/>
    <property type="match status" value="1"/>
</dbReference>
<dbReference type="Pfam" id="PF07478">
    <property type="entry name" value="Dala_Dala_lig_C"/>
    <property type="match status" value="1"/>
</dbReference>
<dbReference type="Pfam" id="PF01820">
    <property type="entry name" value="Dala_Dala_lig_N"/>
    <property type="match status" value="1"/>
</dbReference>
<dbReference type="PIRSF" id="PIRSF039102">
    <property type="entry name" value="Ddl/VanB"/>
    <property type="match status" value="1"/>
</dbReference>
<dbReference type="SUPFAM" id="SSF56059">
    <property type="entry name" value="Glutathione synthetase ATP-binding domain-like"/>
    <property type="match status" value="1"/>
</dbReference>
<dbReference type="SUPFAM" id="SSF52440">
    <property type="entry name" value="PreATP-grasp domain"/>
    <property type="match status" value="1"/>
</dbReference>
<dbReference type="PROSITE" id="PS50975">
    <property type="entry name" value="ATP_GRASP"/>
    <property type="match status" value="1"/>
</dbReference>
<dbReference type="PROSITE" id="PS00843">
    <property type="entry name" value="DALA_DALA_LIGASE_1"/>
    <property type="match status" value="1"/>
</dbReference>
<dbReference type="PROSITE" id="PS00844">
    <property type="entry name" value="DALA_DALA_LIGASE_2"/>
    <property type="match status" value="1"/>
</dbReference>
<protein>
    <recommendedName>
        <fullName evidence="2">D-alanine--D-alanine ligase</fullName>
        <ecNumber evidence="2">6.3.2.4</ecNumber>
    </recommendedName>
    <alternativeName>
        <fullName evidence="2">D-Ala-D-Ala ligase</fullName>
    </alternativeName>
    <alternativeName>
        <fullName evidence="2">D-alanylalanine synthetase</fullName>
    </alternativeName>
</protein>
<accession>Q5F6M0</accession>